<protein>
    <recommendedName>
        <fullName>Endogenous retrovirus group K member 8 Env polyprotein</fullName>
    </recommendedName>
    <alternativeName>
        <fullName>EnvK6 protein</fullName>
    </alternativeName>
    <alternativeName>
        <fullName>Envelope polyprotein</fullName>
    </alternativeName>
    <alternativeName>
        <fullName>HERV-K115 envelope protein</fullName>
    </alternativeName>
    <alternativeName>
        <fullName>HERV-K_8p23.1 provirus ancestral Env polyprotein</fullName>
    </alternativeName>
    <component>
        <recommendedName>
            <fullName>Surface protein</fullName>
            <shortName>SU</shortName>
        </recommendedName>
    </component>
    <component>
        <recommendedName>
            <fullName>Transmembrane protein</fullName>
            <shortName>TM</shortName>
        </recommendedName>
    </component>
</protein>
<keyword id="KW-1003">Cell membrane</keyword>
<keyword id="KW-0165">Cleavage on pair of basic residues</keyword>
<keyword id="KW-1015">Disulfide bond</keyword>
<keyword id="KW-0895">ERV</keyword>
<keyword id="KW-0325">Glycoprotein</keyword>
<keyword id="KW-0472">Membrane</keyword>
<keyword id="KW-1185">Reference proteome</keyword>
<keyword id="KW-0732">Signal</keyword>
<keyword id="KW-0812">Transmembrane</keyword>
<keyword id="KW-1133">Transmembrane helix</keyword>
<keyword id="KW-0814">Transposable element</keyword>
<keyword id="KW-0261">Viral envelope protein</keyword>
<keyword id="KW-0946">Virion</keyword>
<organism>
    <name type="scientific">Homo sapiens</name>
    <name type="common">Human</name>
    <dbReference type="NCBI Taxonomy" id="9606"/>
    <lineage>
        <taxon>Eukaryota</taxon>
        <taxon>Metazoa</taxon>
        <taxon>Chordata</taxon>
        <taxon>Craniata</taxon>
        <taxon>Vertebrata</taxon>
        <taxon>Euteleostomi</taxon>
        <taxon>Mammalia</taxon>
        <taxon>Eutheria</taxon>
        <taxon>Euarchontoglires</taxon>
        <taxon>Primates</taxon>
        <taxon>Haplorrhini</taxon>
        <taxon>Catarrhini</taxon>
        <taxon>Hominidae</taxon>
        <taxon>Homo</taxon>
    </lineage>
</organism>
<accession>Q902F8</accession>
<sequence length="699" mass="79168">MNPSEMQRKAPPRRRRHRNRAPLTHKMNKMVTSEEQMKLPSTKKAEPPTWAQLKKLTQLATKYLENTKVTQTPESMLLAALMIVSMVVSLPMPAGAAVANYTNWAYVPFPPLIRAVTWMDNPIEVYVNDSVWVPGPIDDRCPAKPEEEGMMINISIGYRYPPICLGRAPGCLMPAVQNWLVEVPTVSPISRFTYHMVSGMSLRPRVNYLQDFSYQRSLKFRPKGKPCPKEIPKESKNTEVLVWEECVANSAVILQNNEFGTIIDWAPRGQFYHNCSGQTQSCPSAQVSPAVDSDLTESLDKHKHKKLQSFYPWEWGEKRISTPRPKIVSPVSGPEHPELWRLTVASHHIRIWSGNQTLETRDRKPFYTVDLNSSLTLPLQSCVKPPYMLVVGNIVIKPDSQTITCENCRLLTCIDSTFNWQHRILLVRAREGVWIPVSMDRPWEASPSVHILTEVLKGVLNRSKRFIFTLIAVIMGLIAVTATAAVAGVALHSSVQSVNFVNDGQKNSTRLWNSQSSIDQKLANQINDLRQTVIWMGDRLMSLEHRFQLQCDWNTSDFCITPQIYNDSEHHWDMVRRHLQGREDNLTLDISKLKEQIFEASKAHLNLVPGTEAIAGVADGLANLNPVTWVKTIGSTTIINLILILVCLFCLLLVCRCTQQLRRDSDHRERAMMTMAVLSKRKGGNVGKSKRDQIVTVSV</sequence>
<reference key="1">
    <citation type="journal article" date="2006" name="Nature">
        <title>DNA sequence and analysis of human chromosome 8.</title>
        <authorList>
            <person name="Nusbaum C."/>
            <person name="Mikkelsen T.S."/>
            <person name="Zody M.C."/>
            <person name="Asakawa S."/>
            <person name="Taudien S."/>
            <person name="Garber M."/>
            <person name="Kodira C.D."/>
            <person name="Schueler M.G."/>
            <person name="Shimizu A."/>
            <person name="Whittaker C.A."/>
            <person name="Chang J.L."/>
            <person name="Cuomo C.A."/>
            <person name="Dewar K."/>
            <person name="FitzGerald M.G."/>
            <person name="Yang X."/>
            <person name="Allen N.R."/>
            <person name="Anderson S."/>
            <person name="Asakawa T."/>
            <person name="Blechschmidt K."/>
            <person name="Bloom T."/>
            <person name="Borowsky M.L."/>
            <person name="Butler J."/>
            <person name="Cook A."/>
            <person name="Corum B."/>
            <person name="DeArellano K."/>
            <person name="DeCaprio D."/>
            <person name="Dooley K.T."/>
            <person name="Dorris L. III"/>
            <person name="Engels R."/>
            <person name="Gloeckner G."/>
            <person name="Hafez N."/>
            <person name="Hagopian D.S."/>
            <person name="Hall J.L."/>
            <person name="Ishikawa S.K."/>
            <person name="Jaffe D.B."/>
            <person name="Kamat A."/>
            <person name="Kudoh J."/>
            <person name="Lehmann R."/>
            <person name="Lokitsang T."/>
            <person name="Macdonald P."/>
            <person name="Major J.E."/>
            <person name="Matthews C.D."/>
            <person name="Mauceli E."/>
            <person name="Menzel U."/>
            <person name="Mihalev A.H."/>
            <person name="Minoshima S."/>
            <person name="Murayama Y."/>
            <person name="Naylor J.W."/>
            <person name="Nicol R."/>
            <person name="Nguyen C."/>
            <person name="O'Leary S.B."/>
            <person name="O'Neill K."/>
            <person name="Parker S.C.J."/>
            <person name="Polley A."/>
            <person name="Raymond C.K."/>
            <person name="Reichwald K."/>
            <person name="Rodriguez J."/>
            <person name="Sasaki T."/>
            <person name="Schilhabel M."/>
            <person name="Siddiqui R."/>
            <person name="Smith C.L."/>
            <person name="Sneddon T.P."/>
            <person name="Talamas J.A."/>
            <person name="Tenzin P."/>
            <person name="Topham K."/>
            <person name="Venkataraman V."/>
            <person name="Wen G."/>
            <person name="Yamazaki S."/>
            <person name="Young S.K."/>
            <person name="Zeng Q."/>
            <person name="Zimmer A.R."/>
            <person name="Rosenthal A."/>
            <person name="Birren B.W."/>
            <person name="Platzer M."/>
            <person name="Shimizu N."/>
            <person name="Lander E.S."/>
        </authorList>
    </citation>
    <scope>NUCLEOTIDE SEQUENCE [LARGE SCALE GENOMIC DNA]</scope>
</reference>
<reference key="2">
    <citation type="journal article" date="2001" name="Curr. Biol.">
        <title>Insertional polymorphisms of full-length endogenous retroviruses in humans.</title>
        <authorList>
            <person name="Turner G."/>
            <person name="Barbulescu M."/>
            <person name="Su M."/>
            <person name="Jensen-Seaman M.I."/>
            <person name="Kidd K.K."/>
            <person name="Lenz J."/>
        </authorList>
    </citation>
    <scope>IDENTIFICATION</scope>
</reference>
<reference key="3">
    <citation type="journal article" date="2003" name="J. Virol.">
        <title>Survey of human genes of retroviral origin: identification and transcriptome of the genes with coding capacity for complete envelope proteins.</title>
        <authorList>
            <person name="de Parseval N."/>
            <person name="Lazar V."/>
            <person name="Casella J.-F."/>
            <person name="Benit L."/>
            <person name="Heidmann T."/>
        </authorList>
    </citation>
    <scope>CHARACTERIZATION</scope>
</reference>
<reference key="4">
    <citation type="journal article" date="2003" name="Proc. Natl. Acad. Sci. U.S.A.">
        <title>Genomewide screening for fusogenic human endogenous retrovirus envelopes identifies syncytin 2, a gene conserved on primate evolution.</title>
        <authorList>
            <person name="Blaise S."/>
            <person name="de Parseval N."/>
            <person name="Benit L."/>
            <person name="Heidmann T."/>
        </authorList>
    </citation>
    <scope>FUNCTION</scope>
</reference>
<reference key="5">
    <citation type="journal article" date="2003" name="Oncogene">
        <title>Quantitation of HERV-K env gene expression and splicing in human breast cancer.</title>
        <authorList>
            <person name="Wang-Johanning F."/>
            <person name="Frost A.R."/>
            <person name="Jian B."/>
            <person name="Epp L."/>
            <person name="Lu D.W."/>
            <person name="Johanning G.L."/>
        </authorList>
    </citation>
    <scope>SUBGENOMIC RNA</scope>
</reference>
<name>ENK8_HUMAN</name>
<proteinExistence type="evidence at protein level"/>
<feature type="signal peptide" evidence="2">
    <location>
        <begin position="1"/>
        <end position="89"/>
    </location>
</feature>
<feature type="chain" id="PRO_0000008512" description="Endogenous retrovirus group K member 8 Env polyprotein">
    <location>
        <begin position="90"/>
        <end position="699"/>
    </location>
</feature>
<feature type="chain" id="PRO_0000008513" description="Surface protein" evidence="1">
    <location>
        <begin position="90"/>
        <end position="465"/>
    </location>
</feature>
<feature type="chain" id="PRO_0000008514" description="Transmembrane protein" evidence="1">
    <location>
        <begin position="466"/>
        <end position="699"/>
    </location>
</feature>
<feature type="topological domain" description="Extracellular" evidence="2">
    <location>
        <begin position="90"/>
        <end position="632"/>
    </location>
</feature>
<feature type="transmembrane region" description="Helical" evidence="2">
    <location>
        <begin position="633"/>
        <end position="653"/>
    </location>
</feature>
<feature type="topological domain" description="Cytoplasmic" evidence="2">
    <location>
        <begin position="654"/>
        <end position="699"/>
    </location>
</feature>
<feature type="region of interest" description="Disordered" evidence="3">
    <location>
        <begin position="1"/>
        <end position="47"/>
    </location>
</feature>
<feature type="region of interest" description="Fusion peptide" evidence="2">
    <location>
        <begin position="466"/>
        <end position="486"/>
    </location>
</feature>
<feature type="compositionally biased region" description="Basic residues" evidence="3">
    <location>
        <begin position="10"/>
        <end position="20"/>
    </location>
</feature>
<feature type="site" description="Cleavage" evidence="1">
    <location>
        <begin position="465"/>
        <end position="466"/>
    </location>
</feature>
<feature type="glycosylation site" description="N-linked (GlcNAc...) asparagine" evidence="2">
    <location>
        <position position="100"/>
    </location>
</feature>
<feature type="glycosylation site" description="N-linked (GlcNAc...) asparagine" evidence="2">
    <location>
        <position position="128"/>
    </location>
</feature>
<feature type="glycosylation site" description="N-linked (GlcNAc...) asparagine" evidence="2">
    <location>
        <position position="153"/>
    </location>
</feature>
<feature type="glycosylation site" description="N-linked (GlcNAc...) asparagine" evidence="2">
    <location>
        <position position="274"/>
    </location>
</feature>
<feature type="glycosylation site" description="N-linked (GlcNAc...) asparagine" evidence="2">
    <location>
        <position position="355"/>
    </location>
</feature>
<feature type="glycosylation site" description="N-linked (GlcNAc...) asparagine" evidence="2">
    <location>
        <position position="372"/>
    </location>
</feature>
<feature type="glycosylation site" description="N-linked (GlcNAc...) asparagine" evidence="2">
    <location>
        <position position="461"/>
    </location>
</feature>
<feature type="glycosylation site" description="N-linked (GlcNAc...) asparagine" evidence="2">
    <location>
        <position position="507"/>
    </location>
</feature>
<feature type="glycosylation site" description="N-linked (GlcNAc...) asparagine" evidence="2">
    <location>
        <position position="554"/>
    </location>
</feature>
<feature type="glycosylation site" description="N-linked (GlcNAc...) asparagine" evidence="2">
    <location>
        <position position="566"/>
    </location>
</feature>
<feature type="glycosylation site" description="N-linked (GlcNAc...) asparagine" evidence="2">
    <location>
        <position position="585"/>
    </location>
</feature>
<gene>
    <name type="primary">ERVK-8</name>
</gene>
<dbReference type="EMBL" id="AC134684">
    <property type="status" value="NOT_ANNOTATED_CDS"/>
    <property type="molecule type" value="Genomic_DNA"/>
</dbReference>
<dbReference type="IntAct" id="Q902F8">
    <property type="interactions" value="1"/>
</dbReference>
<dbReference type="GlyCosmos" id="Q902F8">
    <property type="glycosylation" value="11 sites, No reported glycans"/>
</dbReference>
<dbReference type="iPTMnet" id="Q902F8"/>
<dbReference type="PhosphoSitePlus" id="Q902F8"/>
<dbReference type="BioMuta" id="HGNC:32302"/>
<dbReference type="jPOST" id="Q902F8"/>
<dbReference type="MassIVE" id="Q902F8"/>
<dbReference type="GeneCards" id="ERVK-8"/>
<dbReference type="HGNC" id="HGNC:32302">
    <property type="gene designation" value="ERVK-8"/>
</dbReference>
<dbReference type="neXtProt" id="NX_Q902F8"/>
<dbReference type="PhylomeDB" id="Q902F8"/>
<dbReference type="Pharos" id="Q902F8">
    <property type="development level" value="Tdark"/>
</dbReference>
<dbReference type="Proteomes" id="UP000005640">
    <property type="component" value="Unplaced"/>
</dbReference>
<dbReference type="GO" id="GO:0005886">
    <property type="term" value="C:plasma membrane"/>
    <property type="evidence" value="ECO:0007669"/>
    <property type="project" value="UniProtKB-SubCell"/>
</dbReference>
<dbReference type="GO" id="GO:0005198">
    <property type="term" value="F:structural molecule activity"/>
    <property type="evidence" value="ECO:0007669"/>
    <property type="project" value="InterPro"/>
</dbReference>
<dbReference type="CDD" id="cd09909">
    <property type="entry name" value="HIV-1-like_HR1-HR2"/>
    <property type="match status" value="1"/>
</dbReference>
<dbReference type="InterPro" id="IPR000328">
    <property type="entry name" value="GP41-like"/>
</dbReference>
<dbReference type="InterPro" id="IPR029104">
    <property type="entry name" value="HERV-K_env"/>
</dbReference>
<dbReference type="InterPro" id="IPR051255">
    <property type="entry name" value="Retroviral_env_glycoprotein"/>
</dbReference>
<dbReference type="PANTHER" id="PTHR34313">
    <property type="entry name" value="ENDOGENOUS RETROVIRUS GROUP K MEMBER 113 ENV POLYPROTEIN-RELATED"/>
    <property type="match status" value="1"/>
</dbReference>
<dbReference type="PANTHER" id="PTHR34313:SF3">
    <property type="entry name" value="ENDOGENOUS RETROVIRUS GROUP K MEMBER 113 ENV POLYPROTEIN-RELATED"/>
    <property type="match status" value="1"/>
</dbReference>
<dbReference type="Pfam" id="PF00517">
    <property type="entry name" value="GP41"/>
    <property type="match status" value="1"/>
</dbReference>
<dbReference type="Pfam" id="PF13804">
    <property type="entry name" value="HERV-K_env_2"/>
    <property type="match status" value="1"/>
</dbReference>
<dbReference type="Pfam" id="PF15695">
    <property type="entry name" value="HERV-K_REC"/>
    <property type="match status" value="1"/>
</dbReference>
<comment type="function">
    <text evidence="4">Retroviral envelope proteins mediate receptor recognition and membrane fusion during early infection. Endogenous envelope proteins may have kept, lost or modified their original function during evolution. This endogenous envelope protein has lost its original fusogenic properties.</text>
</comment>
<comment type="function">
    <text evidence="1">SU mediates receptor recognition.</text>
</comment>
<comment type="function">
    <text evidence="1">TM anchors the envelope heterodimer to the viral membrane through one transmembrane domain. The other hydrophobic domain, called fusion peptide, mediates fusion of the viral membrane with the target cell membrane (By similarity).</text>
</comment>
<comment type="subunit">
    <text evidence="1">The surface (SU) and transmembrane (TM) proteins form a heterodimer. SU and TM are attached by noncovalent interactions or by a labile interchain disulfide bond (By similarity).</text>
</comment>
<comment type="subcellular location">
    <molecule>Transmembrane protein</molecule>
    <subcellularLocation>
        <location evidence="1">Cell membrane</location>
        <topology evidence="1">Single-pass type I membrane protein</topology>
    </subcellularLocation>
</comment>
<comment type="subcellular location">
    <molecule>Surface protein</molecule>
    <subcellularLocation>
        <location evidence="1">Cell membrane</location>
        <topology evidence="1">Peripheral membrane protein</topology>
    </subcellularLocation>
    <text evidence="1">The surface protein is not anchored to the membrane, but localizes to the extracellular surface through its binding to TM.</text>
</comment>
<comment type="subcellular location">
    <molecule>Endogenous retrovirus group K member 8 Env polyprotein</molecule>
    <subcellularLocation>
        <location evidence="1">Virion</location>
    </subcellularLocation>
</comment>
<comment type="PTM">
    <text evidence="1">Specific enzymatic cleavages in vivo yield the mature SU and TM proteins.</text>
</comment>
<comment type="miscellaneous">
    <text>Insertional polymorphism. Provirus present in 16% of tested individuals.</text>
</comment>
<comment type="miscellaneous">
    <text>Has a type 2 genome. The HERV-K(HML-2) family contains type 1 and type 2 genomes depending on the absence or presence of 292 nucleotides at the 5'-end of the env gene resulting in Env proteins of distinct sizes. Despite their overall retroviral envelope structure HERV-K(HML-2) type 1 envelope proteins lack a predictable signal sequence. Subgenomic RNA transcripts coding for full-length envelope proteins have been detected for both type of genomes.</text>
</comment>
<comment type="miscellaneous">
    <text>Intragenic, in first intron of DEFB107 gene.</text>
</comment>
<comment type="similarity">
    <text evidence="5">Belongs to the beta type-B retroviral envelope protein family. HERV class-II K(HML-2) env subfamily.</text>
</comment>
<evidence type="ECO:0000250" key="1"/>
<evidence type="ECO:0000255" key="2"/>
<evidence type="ECO:0000256" key="3">
    <source>
        <dbReference type="SAM" id="MobiDB-lite"/>
    </source>
</evidence>
<evidence type="ECO:0000269" key="4">
    <source>
    </source>
</evidence>
<evidence type="ECO:0000305" key="5"/>